<comment type="function">
    <text evidence="1">Probably acts as a transcriptional activator. Binds to the GCC-box pathogenesis-related promoter element. May be involved in the regulation of gene expression by stress factors and by components of stress signal transduction pathways (By similarity).</text>
</comment>
<comment type="subcellular location">
    <subcellularLocation>
        <location evidence="4">Nucleus</location>
    </subcellularLocation>
</comment>
<comment type="similarity">
    <text evidence="4">Belongs to the AP2/ERF transcription factor family. ERF subfamily.</text>
</comment>
<feature type="chain" id="PRO_0000290388" description="Ethylene-responsive transcription factor ERF035">
    <location>
        <begin position="1"/>
        <end position="256"/>
    </location>
</feature>
<feature type="DNA-binding region" description="AP2/ERF" evidence="2">
    <location>
        <begin position="70"/>
        <end position="127"/>
    </location>
</feature>
<feature type="region of interest" description="Disordered" evidence="3">
    <location>
        <begin position="33"/>
        <end position="72"/>
    </location>
</feature>
<feature type="region of interest" description="Disordered" evidence="3">
    <location>
        <begin position="186"/>
        <end position="205"/>
    </location>
</feature>
<feature type="compositionally biased region" description="Low complexity" evidence="3">
    <location>
        <begin position="33"/>
        <end position="42"/>
    </location>
</feature>
<feature type="compositionally biased region" description="Low complexity" evidence="3">
    <location>
        <begin position="186"/>
        <end position="197"/>
    </location>
</feature>
<dbReference type="EMBL" id="AY560848">
    <property type="protein sequence ID" value="AAT44915.1"/>
    <property type="molecule type" value="mRNA"/>
</dbReference>
<dbReference type="EMBL" id="AL138646">
    <property type="protein sequence ID" value="CAB81835.1"/>
    <property type="molecule type" value="Genomic_DNA"/>
</dbReference>
<dbReference type="EMBL" id="CP002686">
    <property type="protein sequence ID" value="AEE80067.1"/>
    <property type="molecule type" value="Genomic_DNA"/>
</dbReference>
<dbReference type="EMBL" id="BT029458">
    <property type="protein sequence ID" value="ABK59687.1"/>
    <property type="molecule type" value="mRNA"/>
</dbReference>
<dbReference type="PIR" id="T47860">
    <property type="entry name" value="T47860"/>
</dbReference>
<dbReference type="RefSeq" id="NP_191608.1">
    <property type="nucleotide sequence ID" value="NM_115913.3"/>
</dbReference>
<dbReference type="SMR" id="Q9M210"/>
<dbReference type="FunCoup" id="Q9M210">
    <property type="interactions" value="36"/>
</dbReference>
<dbReference type="STRING" id="3702.Q9M210"/>
<dbReference type="PaxDb" id="3702-AT3G60490.1"/>
<dbReference type="EnsemblPlants" id="AT3G60490.1">
    <property type="protein sequence ID" value="AT3G60490.1"/>
    <property type="gene ID" value="AT3G60490"/>
</dbReference>
<dbReference type="GeneID" id="825220"/>
<dbReference type="Gramene" id="AT3G60490.1">
    <property type="protein sequence ID" value="AT3G60490.1"/>
    <property type="gene ID" value="AT3G60490"/>
</dbReference>
<dbReference type="KEGG" id="ath:AT3G60490"/>
<dbReference type="Araport" id="AT3G60490"/>
<dbReference type="TAIR" id="AT3G60490">
    <property type="gene designation" value="ERF35"/>
</dbReference>
<dbReference type="eggNOG" id="ENOG502QW5S">
    <property type="taxonomic scope" value="Eukaryota"/>
</dbReference>
<dbReference type="HOGENOM" id="CLU_063331_0_0_1"/>
<dbReference type="InParanoid" id="Q9M210"/>
<dbReference type="OMA" id="FTDGLMN"/>
<dbReference type="OrthoDB" id="1932364at2759"/>
<dbReference type="PhylomeDB" id="Q9M210"/>
<dbReference type="PRO" id="PR:Q9M210"/>
<dbReference type="Proteomes" id="UP000006548">
    <property type="component" value="Chromosome 3"/>
</dbReference>
<dbReference type="ExpressionAtlas" id="Q9M210">
    <property type="expression patterns" value="baseline and differential"/>
</dbReference>
<dbReference type="GO" id="GO:0005634">
    <property type="term" value="C:nucleus"/>
    <property type="evidence" value="ECO:0007669"/>
    <property type="project" value="UniProtKB-SubCell"/>
</dbReference>
<dbReference type="GO" id="GO:0003700">
    <property type="term" value="F:DNA-binding transcription factor activity"/>
    <property type="evidence" value="ECO:0000250"/>
    <property type="project" value="TAIR"/>
</dbReference>
<dbReference type="GO" id="GO:0000976">
    <property type="term" value="F:transcription cis-regulatory region binding"/>
    <property type="evidence" value="ECO:0000353"/>
    <property type="project" value="TAIR"/>
</dbReference>
<dbReference type="GO" id="GO:0009873">
    <property type="term" value="P:ethylene-activated signaling pathway"/>
    <property type="evidence" value="ECO:0007669"/>
    <property type="project" value="UniProtKB-KW"/>
</dbReference>
<dbReference type="CDD" id="cd00018">
    <property type="entry name" value="AP2"/>
    <property type="match status" value="1"/>
</dbReference>
<dbReference type="FunFam" id="3.30.730.10:FF:000001">
    <property type="entry name" value="Ethylene-responsive transcription factor 2"/>
    <property type="match status" value="1"/>
</dbReference>
<dbReference type="Gene3D" id="3.30.730.10">
    <property type="entry name" value="AP2/ERF domain"/>
    <property type="match status" value="1"/>
</dbReference>
<dbReference type="InterPro" id="IPR001471">
    <property type="entry name" value="AP2/ERF_dom"/>
</dbReference>
<dbReference type="InterPro" id="IPR036955">
    <property type="entry name" value="AP2/ERF_dom_sf"/>
</dbReference>
<dbReference type="InterPro" id="IPR051032">
    <property type="entry name" value="AP2/ERF_TF_ERF_subfamily"/>
</dbReference>
<dbReference type="InterPro" id="IPR016177">
    <property type="entry name" value="DNA-bd_dom_sf"/>
</dbReference>
<dbReference type="PANTHER" id="PTHR31985:SF300">
    <property type="entry name" value="ETHYLENE-RESPONSIVE TRANSCRIPTION FACTOR ERF035"/>
    <property type="match status" value="1"/>
</dbReference>
<dbReference type="PANTHER" id="PTHR31985">
    <property type="entry name" value="ETHYLENE-RESPONSIVE TRANSCRIPTION FACTOR ERF042-RELATED"/>
    <property type="match status" value="1"/>
</dbReference>
<dbReference type="Pfam" id="PF00847">
    <property type="entry name" value="AP2"/>
    <property type="match status" value="1"/>
</dbReference>
<dbReference type="PRINTS" id="PR00367">
    <property type="entry name" value="ETHRSPELEMNT"/>
</dbReference>
<dbReference type="SMART" id="SM00380">
    <property type="entry name" value="AP2"/>
    <property type="match status" value="1"/>
</dbReference>
<dbReference type="SUPFAM" id="SSF54171">
    <property type="entry name" value="DNA-binding domain"/>
    <property type="match status" value="1"/>
</dbReference>
<dbReference type="PROSITE" id="PS51032">
    <property type="entry name" value="AP2_ERF"/>
    <property type="match status" value="1"/>
</dbReference>
<reference key="1">
    <citation type="submission" date="2004-02" db="EMBL/GenBank/DDBJ databases">
        <title>Molecular cloning, expression, phylogenetic and functional characterization of the Arabidopsis AP2/EREBP transcription factor family.</title>
        <authorList>
            <person name="Pan Y."/>
            <person name="Gong W."/>
            <person name="Liu D."/>
            <person name="Fu Q."/>
            <person name="Mei W.-Q."/>
            <person name="Song W.-Q."/>
            <person name="Ma L.-G."/>
            <person name="Luo J.-C."/>
            <person name="Deng X.-W."/>
            <person name="Zhu Y.-X."/>
        </authorList>
    </citation>
    <scope>NUCLEOTIDE SEQUENCE [MRNA]</scope>
</reference>
<reference key="2">
    <citation type="journal article" date="2000" name="Nature">
        <title>Sequence and analysis of chromosome 3 of the plant Arabidopsis thaliana.</title>
        <authorList>
            <person name="Salanoubat M."/>
            <person name="Lemcke K."/>
            <person name="Rieger M."/>
            <person name="Ansorge W."/>
            <person name="Unseld M."/>
            <person name="Fartmann B."/>
            <person name="Valle G."/>
            <person name="Bloecker H."/>
            <person name="Perez-Alonso M."/>
            <person name="Obermaier B."/>
            <person name="Delseny M."/>
            <person name="Boutry M."/>
            <person name="Grivell L.A."/>
            <person name="Mache R."/>
            <person name="Puigdomenech P."/>
            <person name="De Simone V."/>
            <person name="Choisne N."/>
            <person name="Artiguenave F."/>
            <person name="Robert C."/>
            <person name="Brottier P."/>
            <person name="Wincker P."/>
            <person name="Cattolico L."/>
            <person name="Weissenbach J."/>
            <person name="Saurin W."/>
            <person name="Quetier F."/>
            <person name="Schaefer M."/>
            <person name="Mueller-Auer S."/>
            <person name="Gabel C."/>
            <person name="Fuchs M."/>
            <person name="Benes V."/>
            <person name="Wurmbach E."/>
            <person name="Drzonek H."/>
            <person name="Erfle H."/>
            <person name="Jordan N."/>
            <person name="Bangert S."/>
            <person name="Wiedelmann R."/>
            <person name="Kranz H."/>
            <person name="Voss H."/>
            <person name="Holland R."/>
            <person name="Brandt P."/>
            <person name="Nyakatura G."/>
            <person name="Vezzi A."/>
            <person name="D'Angelo M."/>
            <person name="Pallavicini A."/>
            <person name="Toppo S."/>
            <person name="Simionati B."/>
            <person name="Conrad A."/>
            <person name="Hornischer K."/>
            <person name="Kauer G."/>
            <person name="Loehnert T.-H."/>
            <person name="Nordsiek G."/>
            <person name="Reichelt J."/>
            <person name="Scharfe M."/>
            <person name="Schoen O."/>
            <person name="Bargues M."/>
            <person name="Terol J."/>
            <person name="Climent J."/>
            <person name="Navarro P."/>
            <person name="Collado C."/>
            <person name="Perez-Perez A."/>
            <person name="Ottenwaelder B."/>
            <person name="Duchemin D."/>
            <person name="Cooke R."/>
            <person name="Laudie M."/>
            <person name="Berger-Llauro C."/>
            <person name="Purnelle B."/>
            <person name="Masuy D."/>
            <person name="de Haan M."/>
            <person name="Maarse A.C."/>
            <person name="Alcaraz J.-P."/>
            <person name="Cottet A."/>
            <person name="Casacuberta E."/>
            <person name="Monfort A."/>
            <person name="Argiriou A."/>
            <person name="Flores M."/>
            <person name="Liguori R."/>
            <person name="Vitale D."/>
            <person name="Mannhaupt G."/>
            <person name="Haase D."/>
            <person name="Schoof H."/>
            <person name="Rudd S."/>
            <person name="Zaccaria P."/>
            <person name="Mewes H.-W."/>
            <person name="Mayer K.F.X."/>
            <person name="Kaul S."/>
            <person name="Town C.D."/>
            <person name="Koo H.L."/>
            <person name="Tallon L.J."/>
            <person name="Jenkins J."/>
            <person name="Rooney T."/>
            <person name="Rizzo M."/>
            <person name="Walts A."/>
            <person name="Utterback T."/>
            <person name="Fujii C.Y."/>
            <person name="Shea T.P."/>
            <person name="Creasy T.H."/>
            <person name="Haas B."/>
            <person name="Maiti R."/>
            <person name="Wu D."/>
            <person name="Peterson J."/>
            <person name="Van Aken S."/>
            <person name="Pai G."/>
            <person name="Militscher J."/>
            <person name="Sellers P."/>
            <person name="Gill J.E."/>
            <person name="Feldblyum T.V."/>
            <person name="Preuss D."/>
            <person name="Lin X."/>
            <person name="Nierman W.C."/>
            <person name="Salzberg S.L."/>
            <person name="White O."/>
            <person name="Venter J.C."/>
            <person name="Fraser C.M."/>
            <person name="Kaneko T."/>
            <person name="Nakamura Y."/>
            <person name="Sato S."/>
            <person name="Kato T."/>
            <person name="Asamizu E."/>
            <person name="Sasamoto S."/>
            <person name="Kimura T."/>
            <person name="Idesawa K."/>
            <person name="Kawashima K."/>
            <person name="Kishida Y."/>
            <person name="Kiyokawa C."/>
            <person name="Kohara M."/>
            <person name="Matsumoto M."/>
            <person name="Matsuno A."/>
            <person name="Muraki A."/>
            <person name="Nakayama S."/>
            <person name="Nakazaki N."/>
            <person name="Shinpo S."/>
            <person name="Takeuchi C."/>
            <person name="Wada T."/>
            <person name="Watanabe A."/>
            <person name="Yamada M."/>
            <person name="Yasuda M."/>
            <person name="Tabata S."/>
        </authorList>
    </citation>
    <scope>NUCLEOTIDE SEQUENCE [LARGE SCALE GENOMIC DNA]</scope>
    <source>
        <strain>cv. Columbia</strain>
    </source>
</reference>
<reference key="3">
    <citation type="journal article" date="2017" name="Plant J.">
        <title>Araport11: a complete reannotation of the Arabidopsis thaliana reference genome.</title>
        <authorList>
            <person name="Cheng C.Y."/>
            <person name="Krishnakumar V."/>
            <person name="Chan A.P."/>
            <person name="Thibaud-Nissen F."/>
            <person name="Schobel S."/>
            <person name="Town C.D."/>
        </authorList>
    </citation>
    <scope>GENOME REANNOTATION</scope>
    <source>
        <strain>cv. Columbia</strain>
    </source>
</reference>
<reference key="4">
    <citation type="submission" date="2006-11" db="EMBL/GenBank/DDBJ databases">
        <title>Arabidopsis ORF clones.</title>
        <authorList>
            <person name="Bautista V.R."/>
            <person name="Kim C.J."/>
            <person name="Chen H."/>
            <person name="Quinitio C."/>
            <person name="Ecker J.R."/>
        </authorList>
    </citation>
    <scope>NUCLEOTIDE SEQUENCE [LARGE SCALE MRNA]</scope>
    <source>
        <strain>cv. Columbia</strain>
    </source>
</reference>
<reference key="5">
    <citation type="journal article" date="2006" name="Plant Physiol.">
        <title>Genome-wide analysis of the ERF gene family in Arabidopsis and rice.</title>
        <authorList>
            <person name="Nakano T."/>
            <person name="Suzuki K."/>
            <person name="Fujimura T."/>
            <person name="Shinshi H."/>
        </authorList>
    </citation>
    <scope>GENE FAMILY</scope>
    <scope>NOMENCLATURE</scope>
</reference>
<accession>Q9M210</accession>
<keyword id="KW-0010">Activator</keyword>
<keyword id="KW-0238">DNA-binding</keyword>
<keyword id="KW-0936">Ethylene signaling pathway</keyword>
<keyword id="KW-0539">Nucleus</keyword>
<keyword id="KW-1185">Reference proteome</keyword>
<keyword id="KW-0804">Transcription</keyword>
<keyword id="KW-0805">Transcription regulation</keyword>
<organism>
    <name type="scientific">Arabidopsis thaliana</name>
    <name type="common">Mouse-ear cress</name>
    <dbReference type="NCBI Taxonomy" id="3702"/>
    <lineage>
        <taxon>Eukaryota</taxon>
        <taxon>Viridiplantae</taxon>
        <taxon>Streptophyta</taxon>
        <taxon>Embryophyta</taxon>
        <taxon>Tracheophyta</taxon>
        <taxon>Spermatophyta</taxon>
        <taxon>Magnoliopsida</taxon>
        <taxon>eudicotyledons</taxon>
        <taxon>Gunneridae</taxon>
        <taxon>Pentapetalae</taxon>
        <taxon>rosids</taxon>
        <taxon>malvids</taxon>
        <taxon>Brassicales</taxon>
        <taxon>Brassicaceae</taxon>
        <taxon>Camelineae</taxon>
        <taxon>Arabidopsis</taxon>
    </lineage>
</organism>
<gene>
    <name type="primary">ERF035</name>
    <name type="ordered locus">At3g60490</name>
    <name type="ORF">T8B10.150</name>
</gene>
<evidence type="ECO:0000250" key="1"/>
<evidence type="ECO:0000255" key="2">
    <source>
        <dbReference type="PROSITE-ProRule" id="PRU00366"/>
    </source>
</evidence>
<evidence type="ECO:0000256" key="3">
    <source>
        <dbReference type="SAM" id="MobiDB-lite"/>
    </source>
</evidence>
<evidence type="ECO:0000305" key="4"/>
<sequence length="256" mass="28216">MGKQINIESSATHHQDNIVSVITATISSSSVVTSSSDSWSTSKRSLVQDNDSGGKRRKSNVSDDNKNPTSYRGVRMRSWGKWVSEIREPRKKSRIWLGTYPTAEMAARAHDVAALAIKGNSGFLNFPELSGLLPRPVSCSPKDIQAAATKAAEATTWHKPVIDKKLADELSHSELLSTAQSSTSSSFVFSSDTSETSSTDKESNEETVFDLPDLFTDGLMNPNDAFCLCNGTFTWQLYGEEDVGFRFEEPFNWQND</sequence>
<protein>
    <recommendedName>
        <fullName>Ethylene-responsive transcription factor ERF035</fullName>
    </recommendedName>
</protein>
<proteinExistence type="evidence at transcript level"/>
<name>ERF35_ARATH</name>